<organism>
    <name type="scientific">Salmonella typhimurium (strain LT2 / SGSC1412 / ATCC 700720)</name>
    <dbReference type="NCBI Taxonomy" id="99287"/>
    <lineage>
        <taxon>Bacteria</taxon>
        <taxon>Pseudomonadati</taxon>
        <taxon>Pseudomonadota</taxon>
        <taxon>Gammaproteobacteria</taxon>
        <taxon>Enterobacterales</taxon>
        <taxon>Enterobacteriaceae</taxon>
        <taxon>Salmonella</taxon>
    </lineage>
</organism>
<proteinExistence type="evidence at protein level"/>
<accession>Q9XDN5</accession>
<accession>Q7BV79</accession>
<keyword id="KW-0012">Acyltransferase</keyword>
<keyword id="KW-1283">Bacterial microcompartment</keyword>
<keyword id="KW-0479">Metal-binding</keyword>
<keyword id="KW-1185">Reference proteome</keyword>
<keyword id="KW-0808">Transferase</keyword>
<keyword id="KW-0862">Zinc</keyword>
<sequence>MDKELLQSTVRKVLDEMRQRPIPLGVSNRHIHLSAQDYERLFPGHPISEKKALLQPGQYAAEQTVTLVGPKGQLKNVRLLGPLRSVSQVEISRTDARTLGIAAPLRMSGNLKGTPGIRLVSPFAELELPSGVIVAQRHIHMSPLDALILRVSHGDMVSVAIEGDDRGLIFNNVAIRVSPDMRLEMHIDTDEANAAGADNPHAFARLVGPR</sequence>
<reference key="1">
    <citation type="journal article" date="1999" name="J. Bacteriol.">
        <title>The propanediol utilization (pdu) operon of Salmonella enterica serovar typhimurium LT2 includes genes necessary for formation of polyhedral organelles involved in coenzyme B(12)-dependent 1, 2-propanediol degradation.</title>
        <authorList>
            <person name="Bobik T.A."/>
            <person name="Havemann G.D."/>
            <person name="Busch R.J."/>
            <person name="Williams D.S."/>
            <person name="Aldrich H.C."/>
        </authorList>
    </citation>
    <scope>NUCLEOTIDE SEQUENCE [GENOMIC DNA]</scope>
    <scope>PATHWAY</scope>
    <scope>INDUCTION</scope>
    <source>
        <strain>LT2</strain>
    </source>
</reference>
<reference key="2">
    <citation type="journal article" date="2001" name="Nature">
        <title>Complete genome sequence of Salmonella enterica serovar Typhimurium LT2.</title>
        <authorList>
            <person name="McClelland M."/>
            <person name="Sanderson K.E."/>
            <person name="Spieth J."/>
            <person name="Clifton S.W."/>
            <person name="Latreille P."/>
            <person name="Courtney L."/>
            <person name="Porwollik S."/>
            <person name="Ali J."/>
            <person name="Dante M."/>
            <person name="Du F."/>
            <person name="Hou S."/>
            <person name="Layman D."/>
            <person name="Leonard S."/>
            <person name="Nguyen C."/>
            <person name="Scott K."/>
            <person name="Holmes A."/>
            <person name="Grewal N."/>
            <person name="Mulvaney E."/>
            <person name="Ryan E."/>
            <person name="Sun H."/>
            <person name="Florea L."/>
            <person name="Miller W."/>
            <person name="Stoneking T."/>
            <person name="Nhan M."/>
            <person name="Waterston R."/>
            <person name="Wilson R.K."/>
        </authorList>
    </citation>
    <scope>NUCLEOTIDE SEQUENCE [LARGE SCALE GENOMIC DNA]</scope>
    <source>
        <strain>LT2 / SGSC1412 / ATCC 700720</strain>
    </source>
</reference>
<reference key="3">
    <citation type="journal article" date="2003" name="J. Bacteriol.">
        <title>Protein content of polyhedral organelles involved in coenzyme B12-dependent degradation of 1,2-propanediol in Salmonella enterica serovar Typhimurium LT2.</title>
        <authorList>
            <person name="Havemann G.D."/>
            <person name="Bobik T.A."/>
        </authorList>
    </citation>
    <scope>BACTERIAL MICROCOMPARTMENT ABUNDANCE</scope>
    <source>
        <strain>LT2</strain>
    </source>
</reference>
<reference key="4">
    <citation type="journal article" date="2007" name="J. Bacteriol.">
        <title>PduL is an evolutionarily distinct phosphotransacylase involved in B12-dependent 1,2-propanediol degradation by Salmonella enterica serovar typhimurium LT2.</title>
        <authorList>
            <person name="Liu Y."/>
            <person name="Leal N.A."/>
            <person name="Sampson E.M."/>
            <person name="Johnson C.L."/>
            <person name="Havemann G.D."/>
            <person name="Bobik T.A."/>
        </authorList>
    </citation>
    <scope>FUNCTION IN PROPANEDIOL UTILIZATION</scope>
    <scope>CATALYTIC ACTIVITY</scope>
    <scope>BIOPHYSICOCHEMICAL PROPERTIES</scope>
    <scope>PATHWAY</scope>
    <scope>DISRUPTION PHENOTYPE</scope>
    <source>
        <strain>LT2</strain>
    </source>
</reference>
<reference key="5">
    <citation type="journal article" date="2015" name="J. Bacteriol.">
        <title>The PduL Phosphotransacylase Is Used To Recycle Coenzyme A within the Pdu Microcompartment.</title>
        <authorList>
            <person name="Liu Y."/>
            <person name="Jorda J."/>
            <person name="Yeates T.O."/>
            <person name="Bobik T.A."/>
        </authorList>
    </citation>
    <scope>FUNCTION</scope>
    <scope>SUBCELLULAR LOCATION</scope>
    <scope>DOMAIN</scope>
    <scope>DISRUPTION PHENOTYPE</scope>
    <scope>MUTAGENESIS OF 2-ASP--LEU-5 AND 2-ASP--VAL-10</scope>
    <source>
        <strain>LT2</strain>
    </source>
</reference>
<reference key="6">
    <citation type="journal article" date="2016" name="PLoS Biol.">
        <title>The Structural Basis of Coenzyme A Recycling in a Bacterial Organelle.</title>
        <authorList>
            <person name="Erbilgin O."/>
            <person name="Sutter M."/>
            <person name="Kerfeld C.A."/>
        </authorList>
    </citation>
    <scope>CATALYTIC ACTIVITY</scope>
    <scope>SUBUNIT</scope>
    <source>
        <strain>LT2</strain>
    </source>
</reference>
<reference key="7">
    <citation type="journal article" date="2017" name="PLoS Comput. Biol.">
        <title>A systems-level model reveals that 1,2-Propanediol utilization microcompartments enhance pathway flux through intermediate sequestration.</title>
        <authorList>
            <person name="Jakobson C.M."/>
            <person name="Tullman-Ercek D."/>
            <person name="Slininger M.F."/>
            <person name="Mangan N.M."/>
        </authorList>
    </citation>
    <scope>SYSTEM-MODELING</scope>
    <scope>FUNCTION</scope>
    <source>
        <strain>LT2</strain>
    </source>
</reference>
<feature type="chain" id="PRO_0000407698" description="Phosphate propanoyltransferase">
    <location>
        <begin position="1"/>
        <end position="210"/>
    </location>
</feature>
<feature type="binding site" evidence="1">
    <location>
        <begin position="26"/>
        <end position="28"/>
    </location>
    <ligand>
        <name>CoA</name>
        <dbReference type="ChEBI" id="CHEBI:57287"/>
    </ligand>
</feature>
<feature type="binding site" evidence="1">
    <location>
        <position position="30"/>
    </location>
    <ligand>
        <name>Zn(2+)</name>
        <dbReference type="ChEBI" id="CHEBI:29105"/>
        <label>1</label>
    </ligand>
</feature>
<feature type="binding site" evidence="1">
    <location>
        <position position="32"/>
    </location>
    <ligand>
        <name>Zn(2+)</name>
        <dbReference type="ChEBI" id="CHEBI:29105"/>
        <label>1</label>
    </ligand>
</feature>
<feature type="binding site" evidence="1">
    <location>
        <position position="71"/>
    </location>
    <ligand>
        <name>CoA</name>
        <dbReference type="ChEBI" id="CHEBI:57287"/>
    </ligand>
</feature>
<feature type="binding site" evidence="1">
    <location>
        <position position="78"/>
    </location>
    <ligand>
        <name>CoA</name>
        <dbReference type="ChEBI" id="CHEBI:57287"/>
    </ligand>
</feature>
<feature type="binding site" evidence="1">
    <location>
        <position position="84"/>
    </location>
    <ligand>
        <name>phosphate</name>
        <dbReference type="ChEBI" id="CHEBI:43474"/>
    </ligand>
</feature>
<feature type="binding site" evidence="1">
    <location>
        <position position="90"/>
    </location>
    <ligand>
        <name>Zn(2+)</name>
        <dbReference type="ChEBI" id="CHEBI:29105"/>
        <label>1</label>
    </ligand>
</feature>
<feature type="binding site" evidence="1">
    <location>
        <position position="138"/>
    </location>
    <ligand>
        <name>Zn(2+)</name>
        <dbReference type="ChEBI" id="CHEBI:29105"/>
        <label>2</label>
    </ligand>
</feature>
<feature type="binding site" evidence="1">
    <location>
        <position position="140"/>
    </location>
    <ligand>
        <name>Zn(2+)</name>
        <dbReference type="ChEBI" id="CHEBI:29105"/>
        <label>2</label>
    </ligand>
</feature>
<feature type="binding site" evidence="1">
    <location>
        <position position="186"/>
    </location>
    <ligand>
        <name>Zn(2+)</name>
        <dbReference type="ChEBI" id="CHEBI:29105"/>
        <label>2</label>
    </ligand>
</feature>
<feature type="binding site" evidence="1">
    <location>
        <position position="193"/>
    </location>
    <ligand>
        <name>CoA</name>
        <dbReference type="ChEBI" id="CHEBI:57287"/>
    </ligand>
</feature>
<feature type="mutagenesis site" description="Considerably decreased amount of PduL in BMCs, enzyme has greater than wild-type activity." evidence="5">
    <location>
        <begin position="2"/>
        <end position="10"/>
    </location>
</feature>
<feature type="mutagenesis site" description="Decreased amount of PduL in BMCs, enzyme has wild-type activity." evidence="5">
    <location>
        <begin position="2"/>
        <end position="5"/>
    </location>
</feature>
<dbReference type="EC" id="2.3.1.222" evidence="4"/>
<dbReference type="EMBL" id="AF026270">
    <property type="protein sequence ID" value="AAD39011.1"/>
    <property type="molecule type" value="Genomic_DNA"/>
</dbReference>
<dbReference type="EMBL" id="AE006468">
    <property type="protein sequence ID" value="AAL20951.1"/>
    <property type="molecule type" value="Genomic_DNA"/>
</dbReference>
<dbReference type="RefSeq" id="NP_460992.1">
    <property type="nucleotide sequence ID" value="NC_003197.2"/>
</dbReference>
<dbReference type="RefSeq" id="WP_000356709.1">
    <property type="nucleotide sequence ID" value="NC_003197.2"/>
</dbReference>
<dbReference type="SMR" id="Q9XDN5"/>
<dbReference type="STRING" id="99287.STM2047"/>
<dbReference type="PaxDb" id="99287-STM2047"/>
<dbReference type="GeneID" id="1253568"/>
<dbReference type="KEGG" id="stm:STM2047"/>
<dbReference type="PATRIC" id="fig|99287.12.peg.2169"/>
<dbReference type="HOGENOM" id="CLU_080676_1_0_6"/>
<dbReference type="OMA" id="DMHIDTD"/>
<dbReference type="PhylomeDB" id="Q9XDN5"/>
<dbReference type="BioCyc" id="MetaCyc:STM2047-MONOMER"/>
<dbReference type="BioCyc" id="SENT99287:STM2047-MONOMER"/>
<dbReference type="BRENDA" id="2.3.1.222">
    <property type="organism ID" value="5542"/>
</dbReference>
<dbReference type="UniPathway" id="UPA00621"/>
<dbReference type="Proteomes" id="UP000001014">
    <property type="component" value="Chromosome"/>
</dbReference>
<dbReference type="GO" id="GO:0031469">
    <property type="term" value="C:bacterial microcompartment"/>
    <property type="evidence" value="ECO:0007669"/>
    <property type="project" value="UniProtKB-SubCell"/>
</dbReference>
<dbReference type="GO" id="GO:0016747">
    <property type="term" value="F:acyltransferase activity, transferring groups other than amino-acyl groups"/>
    <property type="evidence" value="ECO:0007669"/>
    <property type="project" value="InterPro"/>
</dbReference>
<dbReference type="GO" id="GO:0046872">
    <property type="term" value="F:metal ion binding"/>
    <property type="evidence" value="ECO:0007669"/>
    <property type="project" value="UniProtKB-KW"/>
</dbReference>
<dbReference type="GO" id="GO:0051144">
    <property type="term" value="P:propanediol catabolic process"/>
    <property type="evidence" value="ECO:0007669"/>
    <property type="project" value="UniProtKB-UniPathway"/>
</dbReference>
<dbReference type="InterPro" id="IPR008300">
    <property type="entry name" value="PTAC"/>
</dbReference>
<dbReference type="NCBIfam" id="NF011652">
    <property type="entry name" value="PRK15070.1"/>
    <property type="match status" value="1"/>
</dbReference>
<dbReference type="PANTHER" id="PTHR39453">
    <property type="entry name" value="PHOSPHATE PROPANOYLTRANSFERASE"/>
    <property type="match status" value="1"/>
</dbReference>
<dbReference type="PANTHER" id="PTHR39453:SF1">
    <property type="entry name" value="PHOSPHATE PROPANOYLTRANSFERASE"/>
    <property type="match status" value="1"/>
</dbReference>
<dbReference type="Pfam" id="PF06130">
    <property type="entry name" value="PTAC"/>
    <property type="match status" value="1"/>
</dbReference>
<dbReference type="PIRSF" id="PIRSF010130">
    <property type="entry name" value="PduL"/>
    <property type="match status" value="1"/>
</dbReference>
<protein>
    <recommendedName>
        <fullName>Phosphate propanoyltransferase</fullName>
        <ecNumber evidence="4">2.3.1.222</ecNumber>
    </recommendedName>
    <alternativeName>
        <fullName>Phosphate acyltransferase PduL</fullName>
    </alternativeName>
    <alternativeName>
        <fullName evidence="8">Phosphotransacylase PduL</fullName>
        <shortName evidence="8">PTAC</shortName>
    </alternativeName>
    <alternativeName>
        <fullName>Propanediol utilization protein PduL</fullName>
    </alternativeName>
</protein>
<gene>
    <name evidence="7" type="primary">pduL</name>
    <name type="ordered locus">STM2047</name>
</gene>
<name>PDUL_SALTY</name>
<comment type="function">
    <text evidence="4 5">Involved in 1,2-propanediol (1,2-PD) utilization in the bacterial microcompartment (BMC) dedicated to 1,2-PD degradation by catalyzing the conversion of propanoyl-CoA to propanoyl-phosphate. Also able to catalyze the reverse reaction. Also has phosphate acetyltransferase activity to a lesser extent (PubMed:17158662). Required for optimal growth on 1,2-PD when the BMC is intact. CoA is regenerated within the BMC (for use by PduP) via this enzyme, although there must also be cofactor transport across the BMC. Directly targeted to the BMC (PubMed:25962918).</text>
</comment>
<comment type="function">
    <text evidence="13">The 1,2-PD-specific bacterial microcompartment (BMC) concentrates low levels of 1,2-PD catabolic enzymes, concentrates volatile reaction intermediates thus enhancing pathway flux and keeps the level of toxic, mutagenic propionaldehyde low.</text>
</comment>
<comment type="catalytic activity">
    <reaction evidence="4">
        <text>propanoyl-CoA + phosphate = propanoyl phosphate + CoA</text>
        <dbReference type="Rhea" id="RHEA:28046"/>
        <dbReference type="ChEBI" id="CHEBI:43474"/>
        <dbReference type="ChEBI" id="CHEBI:57287"/>
        <dbReference type="ChEBI" id="CHEBI:57392"/>
        <dbReference type="ChEBI" id="CHEBI:58933"/>
        <dbReference type="EC" id="2.3.1.222"/>
    </reaction>
    <physiologicalReaction direction="left-to-right" evidence="4">
        <dbReference type="Rhea" id="RHEA:28047"/>
    </physiologicalReaction>
    <physiologicalReaction direction="right-to-left" evidence="4 6">
        <dbReference type="Rhea" id="RHEA:28048"/>
    </physiologicalReaction>
</comment>
<comment type="cofactor">
    <cofactor evidence="1">
        <name>Zn(2+)</name>
        <dbReference type="ChEBI" id="CHEBI:29105"/>
    </cofactor>
    <text evidence="1">There are 2 Zn(2+) ions per monomer; Zn(2+) and CoA bind inbetween the 2 domains in each monomer.</text>
</comment>
<comment type="biophysicochemical properties">
    <kinetics>
        <KM evidence="4">0.61 mM for propanoyl-phosphate</KM>
        <KM evidence="4">0.97 mM for acetyl-phosphate</KM>
        <Vmax evidence="4">51.7 uM/min/mg enzyme with propanoyl-phosphate as substrate</Vmax>
        <Vmax evidence="4">13.4 uM/min/mg enzyme with acetyl-phosphate as substrate</Vmax>
        <text evidence="4">The above values were measured with a recombinant PduL fused to eight C-terminal histidine residues (PduL-His8). The Vmax values may be underestimated due to the instability of PduL-His8.</text>
    </kinetics>
</comment>
<comment type="pathway">
    <text evidence="4 9">Polyol metabolism; 1,2-propanediol degradation.</text>
</comment>
<comment type="subunit">
    <text evidence="6">Monomer, when purified in the absence of the encapsulation peptide (EP, residues 1-27). The EP may influence oligomerization.</text>
</comment>
<comment type="subcellular location">
    <subcellularLocation>
        <location evidence="5">Bacterial microcompartment</location>
    </subcellularLocation>
    <text evidence="11">Probably located inside the BMC shell.</text>
</comment>
<comment type="induction">
    <text evidence="2">BMC production is induced by growth on 1,2-PD vitamin B12 medium.</text>
</comment>
<comment type="domain">
    <text evidence="1 5">The N-terminal 20 residues target foreign proteins (tested with eGFP) to the BMC (PubMed:25962918). Formed by 2 beta-barrels, each is capped on both ends by short alpha-helices (By similarity).</text>
</comment>
<comment type="disruption phenotype">
    <text evidence="4">Unable to ferment 1,2-PD, impaired for aerobic growth on this compound.</text>
</comment>
<comment type="miscellaneous">
    <text evidence="10">Evolutionarily distinct from Pta (phosphate acetyltransferase).</text>
</comment>
<comment type="miscellaneous">
    <text evidence="2 3">Bacterial microcompartments (BMC) 100-200 nm in cross section are formed during aerobic growth on minimal 1,2-PD-B12 or anaerobic growth on 1,2-PD-tetrathionate medium, but not during aerobic growth on glucose, anerobic growth on glucose or pyruvate-tetrathionate (PubMed:10498708). BMCs can constitute up to 10% of total cell protein (PubMed:12923081).</text>
</comment>
<comment type="similarity">
    <text evidence="12">Belongs to the PduL family.</text>
</comment>
<evidence type="ECO:0000250" key="1">
    <source>
        <dbReference type="UniProtKB" id="Q21A54"/>
    </source>
</evidence>
<evidence type="ECO:0000269" key="2">
    <source>
    </source>
</evidence>
<evidence type="ECO:0000269" key="3">
    <source>
    </source>
</evidence>
<evidence type="ECO:0000269" key="4">
    <source>
    </source>
</evidence>
<evidence type="ECO:0000269" key="5">
    <source>
    </source>
</evidence>
<evidence type="ECO:0000269" key="6">
    <source>
    </source>
</evidence>
<evidence type="ECO:0000303" key="7">
    <source>
    </source>
</evidence>
<evidence type="ECO:0000303" key="8">
    <source>
    </source>
</evidence>
<evidence type="ECO:0000305" key="9">
    <source>
    </source>
</evidence>
<evidence type="ECO:0000305" key="10">
    <source>
    </source>
</evidence>
<evidence type="ECO:0000305" key="11">
    <source>
    </source>
</evidence>
<evidence type="ECO:0000305" key="12">
    <source>
    </source>
</evidence>
<evidence type="ECO:0000305" key="13">
    <source>
    </source>
</evidence>